<name>SPA3K_CAVPO</name>
<keyword id="KW-0903">Direct protein sequencing</keyword>
<keyword id="KW-0325">Glycoprotein</keyword>
<keyword id="KW-0646">Protease inhibitor</keyword>
<keyword id="KW-1185">Reference proteome</keyword>
<keyword id="KW-0964">Secreted</keyword>
<keyword id="KW-0722">Serine protease inhibitor</keyword>
<keyword id="KW-0732">Signal</keyword>
<feature type="signal peptide" evidence="3">
    <location>
        <begin position="1"/>
        <end position="24"/>
    </location>
</feature>
<feature type="chain" id="PRO_0000032424" description="Serine proteinase inhibitor A3K">
    <location>
        <begin position="25"/>
        <end position="410"/>
    </location>
</feature>
<feature type="region of interest" description="RCL">
    <location>
        <begin position="360"/>
        <end position="381"/>
    </location>
</feature>
<feature type="site" description="Reactive bond" evidence="1">
    <location>
        <begin position="374"/>
        <end position="375"/>
    </location>
</feature>
<feature type="glycosylation site" description="N-linked (GlcNAc...) asparagine" evidence="2">
    <location>
        <position position="62"/>
    </location>
</feature>
<feature type="glycosylation site" description="N-linked (GlcNAc...) asparagine" evidence="2">
    <location>
        <position position="99"/>
    </location>
</feature>
<feature type="glycosylation site" description="N-linked (GlcNAc...) asparagine" evidence="2">
    <location>
        <position position="162"/>
    </location>
</feature>
<feature type="glycosylation site" description="N-linked (GlcNAc...) asparagine" evidence="2">
    <location>
        <position position="229"/>
    </location>
</feature>
<feature type="glycosylation site" description="N-linked (GlcNAc...) asparagine" evidence="2">
    <location>
        <position position="263"/>
    </location>
</feature>
<gene>
    <name type="primary">SERPINA3K</name>
</gene>
<organism>
    <name type="scientific">Cavia porcellus</name>
    <name type="common">Guinea pig</name>
    <dbReference type="NCBI Taxonomy" id="10141"/>
    <lineage>
        <taxon>Eukaryota</taxon>
        <taxon>Metazoa</taxon>
        <taxon>Chordata</taxon>
        <taxon>Craniata</taxon>
        <taxon>Vertebrata</taxon>
        <taxon>Euteleostomi</taxon>
        <taxon>Mammalia</taxon>
        <taxon>Eutheria</taxon>
        <taxon>Euarchontoglires</taxon>
        <taxon>Glires</taxon>
        <taxon>Rodentia</taxon>
        <taxon>Hystricomorpha</taxon>
        <taxon>Caviidae</taxon>
        <taxon>Cavia</taxon>
    </lineage>
</organism>
<accession>P22323</accession>
<sequence>MPSAISRGLLLLAGLCYLVFGIMAEDIQVAQVPSQHMPSHKVPRSLAHFAHSMHRVLTQQSNTSNIFFSPVSIATALAMVSLGAKGDTHTQILRSLEFNLTEIAEADIHDGFQNLLHTLNRPHSEHQLTTGNGLFLDQNLKLKEKFSGDVKTLYHAEAFPTNFSNPKEAEKQINAYVEKGTQGKIVDLVKDLGADTVLALVNYIFFRGKWEKPFDVKHTTQEDFHVDANTTVKVPMMKQQGMHKAFHCSTIQSWVLLLDYEGNVTALFLLPDEGKMQHLEETLTPELVFKFLRKTETMPAYVSLPKLSISGTYDLKEVLRDLGITNVFSGAADLSGITEDMPLKISKGLHKALLTIDEEGTEAAAATVLEATRTARPPRLSFNKPFFFLIIDHSTDTPLFVGKVMDPTKK</sequence>
<evidence type="ECO:0000250" key="1"/>
<evidence type="ECO:0000255" key="2"/>
<evidence type="ECO:0000269" key="3">
    <source>
    </source>
</evidence>
<evidence type="ECO:0000305" key="4"/>
<comment type="function">
    <text>Contrapsin inhibits trypsin-like proteases.</text>
</comment>
<comment type="subcellular location">
    <subcellularLocation>
        <location>Secreted</location>
        <location>Extracellular space</location>
    </subcellularLocation>
</comment>
<comment type="domain">
    <text evidence="1">The reactive center loop (RCL) extends out from the body of the protein and directs binding to the target protease. The protease cleaves the serpin at the reactive site within the RCL, establishing a covalent linkage between the carboxyl group of the serpin reactive site and the serine hydroxyl of the protease. The resulting inactive serpin-protease complex is highly stable (By similarity).</text>
</comment>
<comment type="similarity">
    <text evidence="4">Belongs to the serpin family.</text>
</comment>
<protein>
    <recommendedName>
        <fullName>Serine proteinase inhibitor A3K</fullName>
        <shortName>Serpin A3K</shortName>
    </recommendedName>
    <alternativeName>
        <fullName>Contrapsin</fullName>
        <shortName>CP</shortName>
    </alternativeName>
</protein>
<dbReference type="EMBL" id="M57269">
    <property type="protein sequence ID" value="AAA62806.1"/>
    <property type="molecule type" value="mRNA"/>
</dbReference>
<dbReference type="PIR" id="C39088">
    <property type="entry name" value="C39088"/>
</dbReference>
<dbReference type="RefSeq" id="NP_001166484.1">
    <property type="nucleotide sequence ID" value="NM_001173013.1"/>
</dbReference>
<dbReference type="SMR" id="P22323"/>
<dbReference type="FunCoup" id="P22323">
    <property type="interactions" value="390"/>
</dbReference>
<dbReference type="STRING" id="10141.ENSCPOP00000013842"/>
<dbReference type="MEROPS" id="I04.001"/>
<dbReference type="GlyCosmos" id="P22323">
    <property type="glycosylation" value="5 sites, No reported glycans"/>
</dbReference>
<dbReference type="GeneID" id="100135614"/>
<dbReference type="KEGG" id="cpoc:100135614"/>
<dbReference type="CTD" id="20714"/>
<dbReference type="eggNOG" id="KOG2392">
    <property type="taxonomic scope" value="Eukaryota"/>
</dbReference>
<dbReference type="InParanoid" id="P22323"/>
<dbReference type="OrthoDB" id="671595at2759"/>
<dbReference type="Proteomes" id="UP000005447">
    <property type="component" value="Unassembled WGS sequence"/>
</dbReference>
<dbReference type="GO" id="GO:0005615">
    <property type="term" value="C:extracellular space"/>
    <property type="evidence" value="ECO:0007669"/>
    <property type="project" value="InterPro"/>
</dbReference>
<dbReference type="GO" id="GO:0004867">
    <property type="term" value="F:serine-type endopeptidase inhibitor activity"/>
    <property type="evidence" value="ECO:0007669"/>
    <property type="project" value="UniProtKB-KW"/>
</dbReference>
<dbReference type="CDD" id="cd02056">
    <property type="entry name" value="serpinA1_A1AT"/>
    <property type="match status" value="1"/>
</dbReference>
<dbReference type="FunFam" id="2.30.39.10:FF:000003">
    <property type="entry name" value="alpha-1-antitrypsin isoform X1"/>
    <property type="match status" value="1"/>
</dbReference>
<dbReference type="FunFam" id="3.30.497.10:FF:000001">
    <property type="entry name" value="Serine protease inhibitor"/>
    <property type="match status" value="1"/>
</dbReference>
<dbReference type="FunFam" id="2.10.310.10:FF:000001">
    <property type="entry name" value="Serpin family A member 1"/>
    <property type="match status" value="1"/>
</dbReference>
<dbReference type="Gene3D" id="2.30.39.10">
    <property type="entry name" value="Alpha-1-antitrypsin, domain 1"/>
    <property type="match status" value="1"/>
</dbReference>
<dbReference type="Gene3D" id="3.30.497.10">
    <property type="entry name" value="Antithrombin, subunit I, domain 2"/>
    <property type="match status" value="1"/>
</dbReference>
<dbReference type="Gene3D" id="2.10.310.10">
    <property type="entry name" value="Serpins superfamily"/>
    <property type="match status" value="1"/>
</dbReference>
<dbReference type="InterPro" id="IPR023795">
    <property type="entry name" value="Serpin_CS"/>
</dbReference>
<dbReference type="InterPro" id="IPR023796">
    <property type="entry name" value="Serpin_dom"/>
</dbReference>
<dbReference type="InterPro" id="IPR000215">
    <property type="entry name" value="Serpin_fam"/>
</dbReference>
<dbReference type="InterPro" id="IPR036186">
    <property type="entry name" value="Serpin_sf"/>
</dbReference>
<dbReference type="InterPro" id="IPR042178">
    <property type="entry name" value="Serpin_sf_1"/>
</dbReference>
<dbReference type="InterPro" id="IPR042185">
    <property type="entry name" value="Serpin_sf_2"/>
</dbReference>
<dbReference type="PANTHER" id="PTHR11461:SF165">
    <property type="entry name" value="ALPHA-1-ANTITRYPSIN"/>
    <property type="match status" value="1"/>
</dbReference>
<dbReference type="PANTHER" id="PTHR11461">
    <property type="entry name" value="SERINE PROTEASE INHIBITOR, SERPIN"/>
    <property type="match status" value="1"/>
</dbReference>
<dbReference type="Pfam" id="PF00079">
    <property type="entry name" value="Serpin"/>
    <property type="match status" value="1"/>
</dbReference>
<dbReference type="SMART" id="SM00093">
    <property type="entry name" value="SERPIN"/>
    <property type="match status" value="1"/>
</dbReference>
<dbReference type="SUPFAM" id="SSF56574">
    <property type="entry name" value="Serpins"/>
    <property type="match status" value="1"/>
</dbReference>
<dbReference type="PROSITE" id="PS00284">
    <property type="entry name" value="SERPIN"/>
    <property type="match status" value="1"/>
</dbReference>
<reference key="1">
    <citation type="journal article" date="1991" name="J. Biol. Chem.">
        <title>Molecular cloning and sequence analysis of cDNAs coding for guinea pig alpha 1-antiproteinases S and F and contrapsin.</title>
        <authorList>
            <person name="Suzuki Y."/>
            <person name="Yoshida K."/>
            <person name="Honda E."/>
            <person name="Sinohara H."/>
        </authorList>
    </citation>
    <scope>NUCLEOTIDE SEQUENCE [MRNA]</scope>
    <scope>PROTEIN SEQUENCE OF 25-44</scope>
</reference>
<proteinExistence type="evidence at protein level"/>